<dbReference type="EC" id="3.1.26.4" evidence="1"/>
<dbReference type="EMBL" id="CP000009">
    <property type="protein sequence ID" value="AAW59967.1"/>
    <property type="molecule type" value="Genomic_DNA"/>
</dbReference>
<dbReference type="RefSeq" id="WP_011251770.1">
    <property type="nucleotide sequence ID" value="NZ_LT900338.1"/>
</dbReference>
<dbReference type="SMR" id="Q5FUH9"/>
<dbReference type="STRING" id="290633.GOX0177"/>
<dbReference type="KEGG" id="gox:GOX0177"/>
<dbReference type="eggNOG" id="COG0328">
    <property type="taxonomic scope" value="Bacteria"/>
</dbReference>
<dbReference type="HOGENOM" id="CLU_030894_6_0_5"/>
<dbReference type="Proteomes" id="UP000006375">
    <property type="component" value="Chromosome"/>
</dbReference>
<dbReference type="GO" id="GO:0005737">
    <property type="term" value="C:cytoplasm"/>
    <property type="evidence" value="ECO:0007669"/>
    <property type="project" value="UniProtKB-SubCell"/>
</dbReference>
<dbReference type="GO" id="GO:0000287">
    <property type="term" value="F:magnesium ion binding"/>
    <property type="evidence" value="ECO:0007669"/>
    <property type="project" value="UniProtKB-UniRule"/>
</dbReference>
<dbReference type="GO" id="GO:0003676">
    <property type="term" value="F:nucleic acid binding"/>
    <property type="evidence" value="ECO:0007669"/>
    <property type="project" value="InterPro"/>
</dbReference>
<dbReference type="GO" id="GO:0004523">
    <property type="term" value="F:RNA-DNA hybrid ribonuclease activity"/>
    <property type="evidence" value="ECO:0007669"/>
    <property type="project" value="UniProtKB-UniRule"/>
</dbReference>
<dbReference type="GO" id="GO:0043137">
    <property type="term" value="P:DNA replication, removal of RNA primer"/>
    <property type="evidence" value="ECO:0007669"/>
    <property type="project" value="TreeGrafter"/>
</dbReference>
<dbReference type="CDD" id="cd09278">
    <property type="entry name" value="RNase_HI_prokaryote_like"/>
    <property type="match status" value="1"/>
</dbReference>
<dbReference type="FunFam" id="3.30.420.10:FF:000089">
    <property type="entry name" value="Ribonuclease H"/>
    <property type="match status" value="1"/>
</dbReference>
<dbReference type="Gene3D" id="3.30.420.10">
    <property type="entry name" value="Ribonuclease H-like superfamily/Ribonuclease H"/>
    <property type="match status" value="1"/>
</dbReference>
<dbReference type="HAMAP" id="MF_00042">
    <property type="entry name" value="RNase_H"/>
    <property type="match status" value="1"/>
</dbReference>
<dbReference type="InterPro" id="IPR050092">
    <property type="entry name" value="RNase_H"/>
</dbReference>
<dbReference type="InterPro" id="IPR012337">
    <property type="entry name" value="RNaseH-like_sf"/>
</dbReference>
<dbReference type="InterPro" id="IPR002156">
    <property type="entry name" value="RNaseH_domain"/>
</dbReference>
<dbReference type="InterPro" id="IPR036397">
    <property type="entry name" value="RNaseH_sf"/>
</dbReference>
<dbReference type="InterPro" id="IPR022892">
    <property type="entry name" value="RNaseHI"/>
</dbReference>
<dbReference type="NCBIfam" id="NF001236">
    <property type="entry name" value="PRK00203.1"/>
    <property type="match status" value="1"/>
</dbReference>
<dbReference type="PANTHER" id="PTHR10642">
    <property type="entry name" value="RIBONUCLEASE H1"/>
    <property type="match status" value="1"/>
</dbReference>
<dbReference type="PANTHER" id="PTHR10642:SF26">
    <property type="entry name" value="RIBONUCLEASE H1"/>
    <property type="match status" value="1"/>
</dbReference>
<dbReference type="Pfam" id="PF00075">
    <property type="entry name" value="RNase_H"/>
    <property type="match status" value="1"/>
</dbReference>
<dbReference type="SUPFAM" id="SSF53098">
    <property type="entry name" value="Ribonuclease H-like"/>
    <property type="match status" value="1"/>
</dbReference>
<dbReference type="PROSITE" id="PS50879">
    <property type="entry name" value="RNASE_H_1"/>
    <property type="match status" value="1"/>
</dbReference>
<keyword id="KW-0963">Cytoplasm</keyword>
<keyword id="KW-0255">Endonuclease</keyword>
<keyword id="KW-0378">Hydrolase</keyword>
<keyword id="KW-0460">Magnesium</keyword>
<keyword id="KW-0479">Metal-binding</keyword>
<keyword id="KW-0540">Nuclease</keyword>
<keyword id="KW-1185">Reference proteome</keyword>
<sequence>MSEASGERPRVEIWTDGGCKPNPGPGGWGALLVCRGQEKELLGGDPETTNNRMELTAAAEALEALKRPCIVTLHTDSEYLRNGITRWHTGWVRRKWRNAAGDPVANMDLWQRILEAAKPHEIDWLWVKGHSGDENNERVDQLATRGREEL</sequence>
<comment type="function">
    <text evidence="1">Endonuclease that specifically degrades the RNA of RNA-DNA hybrids.</text>
</comment>
<comment type="catalytic activity">
    <reaction evidence="1">
        <text>Endonucleolytic cleavage to 5'-phosphomonoester.</text>
        <dbReference type="EC" id="3.1.26.4"/>
    </reaction>
</comment>
<comment type="cofactor">
    <cofactor evidence="1">
        <name>Mg(2+)</name>
        <dbReference type="ChEBI" id="CHEBI:18420"/>
    </cofactor>
    <text evidence="1">Binds 1 Mg(2+) ion per subunit. May bind a second metal ion at a regulatory site, or after substrate binding.</text>
</comment>
<comment type="subunit">
    <text evidence="1">Monomer.</text>
</comment>
<comment type="subcellular location">
    <subcellularLocation>
        <location evidence="1">Cytoplasm</location>
    </subcellularLocation>
</comment>
<comment type="similarity">
    <text evidence="1">Belongs to the RNase H family.</text>
</comment>
<evidence type="ECO:0000255" key="1">
    <source>
        <dbReference type="HAMAP-Rule" id="MF_00042"/>
    </source>
</evidence>
<evidence type="ECO:0000255" key="2">
    <source>
        <dbReference type="PROSITE-ProRule" id="PRU00408"/>
    </source>
</evidence>
<accession>Q5FUH9</accession>
<organism>
    <name type="scientific">Gluconobacter oxydans (strain 621H)</name>
    <name type="common">Gluconobacter suboxydans</name>
    <dbReference type="NCBI Taxonomy" id="290633"/>
    <lineage>
        <taxon>Bacteria</taxon>
        <taxon>Pseudomonadati</taxon>
        <taxon>Pseudomonadota</taxon>
        <taxon>Alphaproteobacteria</taxon>
        <taxon>Acetobacterales</taxon>
        <taxon>Acetobacteraceae</taxon>
        <taxon>Gluconobacter</taxon>
    </lineage>
</organism>
<feature type="chain" id="PRO_0000332608" description="Ribonuclease H">
    <location>
        <begin position="1"/>
        <end position="150"/>
    </location>
</feature>
<feature type="domain" description="RNase H type-1" evidence="2">
    <location>
        <begin position="7"/>
        <end position="148"/>
    </location>
</feature>
<feature type="binding site" evidence="1">
    <location>
        <position position="16"/>
    </location>
    <ligand>
        <name>Mg(2+)</name>
        <dbReference type="ChEBI" id="CHEBI:18420"/>
        <label>1</label>
    </ligand>
</feature>
<feature type="binding site" evidence="1">
    <location>
        <position position="16"/>
    </location>
    <ligand>
        <name>Mg(2+)</name>
        <dbReference type="ChEBI" id="CHEBI:18420"/>
        <label>2</label>
    </ligand>
</feature>
<feature type="binding site" evidence="1">
    <location>
        <position position="54"/>
    </location>
    <ligand>
        <name>Mg(2+)</name>
        <dbReference type="ChEBI" id="CHEBI:18420"/>
        <label>1</label>
    </ligand>
</feature>
<feature type="binding site" evidence="1">
    <location>
        <position position="76"/>
    </location>
    <ligand>
        <name>Mg(2+)</name>
        <dbReference type="ChEBI" id="CHEBI:18420"/>
        <label>1</label>
    </ligand>
</feature>
<feature type="binding site" evidence="1">
    <location>
        <position position="140"/>
    </location>
    <ligand>
        <name>Mg(2+)</name>
        <dbReference type="ChEBI" id="CHEBI:18420"/>
        <label>2</label>
    </ligand>
</feature>
<name>RNH_GLUOX</name>
<proteinExistence type="inferred from homology"/>
<protein>
    <recommendedName>
        <fullName evidence="1">Ribonuclease H</fullName>
        <shortName evidence="1">RNase H</shortName>
        <ecNumber evidence="1">3.1.26.4</ecNumber>
    </recommendedName>
</protein>
<reference key="1">
    <citation type="journal article" date="2005" name="Nat. Biotechnol.">
        <title>Complete genome sequence of the acetic acid bacterium Gluconobacter oxydans.</title>
        <authorList>
            <person name="Prust C."/>
            <person name="Hoffmeister M."/>
            <person name="Liesegang H."/>
            <person name="Wiezer A."/>
            <person name="Fricke W.F."/>
            <person name="Ehrenreich A."/>
            <person name="Gottschalk G."/>
            <person name="Deppenmeier U."/>
        </authorList>
    </citation>
    <scope>NUCLEOTIDE SEQUENCE [LARGE SCALE GENOMIC DNA]</scope>
    <source>
        <strain>621H</strain>
    </source>
</reference>
<gene>
    <name evidence="1" type="primary">rnhA</name>
    <name type="ordered locus">GOX0177</name>
</gene>